<proteinExistence type="inferred from homology"/>
<accession>Q17L24</accession>
<dbReference type="EMBL" id="CH477219">
    <property type="protein sequence ID" value="EAT47403.1"/>
    <property type="molecule type" value="Genomic_DNA"/>
</dbReference>
<dbReference type="FunCoup" id="Q17L24">
    <property type="interactions" value="2153"/>
</dbReference>
<dbReference type="STRING" id="7159.Q17L24"/>
<dbReference type="PaxDb" id="7159-AAEL001501-PA"/>
<dbReference type="EnsemblMetazoa" id="AAEL001501-RA">
    <property type="protein sequence ID" value="AAEL001501-PA"/>
    <property type="gene ID" value="AAEL001501"/>
</dbReference>
<dbReference type="GeneID" id="5570916"/>
<dbReference type="KEGG" id="aag:5570916"/>
<dbReference type="CTD" id="57019"/>
<dbReference type="VEuPathDB" id="VectorBase:AAEL001501"/>
<dbReference type="eggNOG" id="KOG4020">
    <property type="taxonomic scope" value="Eukaryota"/>
</dbReference>
<dbReference type="HOGENOM" id="CLU_064393_1_0_1"/>
<dbReference type="InParanoid" id="Q17L24"/>
<dbReference type="OMA" id="GFINCRE"/>
<dbReference type="OrthoDB" id="311633at2759"/>
<dbReference type="PhylomeDB" id="Q17L24"/>
<dbReference type="Proteomes" id="UP000008820">
    <property type="component" value="Chromosome 2"/>
</dbReference>
<dbReference type="Proteomes" id="UP000682892">
    <property type="component" value="Unassembled WGS sequence"/>
</dbReference>
<dbReference type="GO" id="GO:0005758">
    <property type="term" value="C:mitochondrial intermembrane space"/>
    <property type="evidence" value="ECO:0007669"/>
    <property type="project" value="UniProtKB-SubCell"/>
</dbReference>
<dbReference type="GO" id="GO:0051537">
    <property type="term" value="F:2 iron, 2 sulfur cluster binding"/>
    <property type="evidence" value="ECO:0007669"/>
    <property type="project" value="UniProtKB-UniRule"/>
</dbReference>
<dbReference type="GO" id="GO:0051539">
    <property type="term" value="F:4 iron, 4 sulfur cluster binding"/>
    <property type="evidence" value="ECO:0007669"/>
    <property type="project" value="UniProtKB-KW"/>
</dbReference>
<dbReference type="GO" id="GO:0009055">
    <property type="term" value="F:electron transfer activity"/>
    <property type="evidence" value="ECO:0007669"/>
    <property type="project" value="UniProtKB-UniRule"/>
</dbReference>
<dbReference type="GO" id="GO:0046872">
    <property type="term" value="F:metal ion binding"/>
    <property type="evidence" value="ECO:0007669"/>
    <property type="project" value="UniProtKB-KW"/>
</dbReference>
<dbReference type="GO" id="GO:0016226">
    <property type="term" value="P:iron-sulfur cluster assembly"/>
    <property type="evidence" value="ECO:0007669"/>
    <property type="project" value="UniProtKB-UniRule"/>
</dbReference>
<dbReference type="Gene3D" id="3.40.50.150">
    <property type="entry name" value="Vaccinia Virus protein VP39"/>
    <property type="match status" value="1"/>
</dbReference>
<dbReference type="HAMAP" id="MF_03115">
    <property type="entry name" value="Anamorsin"/>
    <property type="match status" value="1"/>
</dbReference>
<dbReference type="InterPro" id="IPR007785">
    <property type="entry name" value="Anamorsin"/>
</dbReference>
<dbReference type="InterPro" id="IPR049011">
    <property type="entry name" value="Anamorsin_N_metazoan"/>
</dbReference>
<dbReference type="InterPro" id="IPR046408">
    <property type="entry name" value="CIAPIN1"/>
</dbReference>
<dbReference type="InterPro" id="IPR029063">
    <property type="entry name" value="SAM-dependent_MTases_sf"/>
</dbReference>
<dbReference type="PANTHER" id="PTHR13273">
    <property type="entry name" value="ANAMORSIN"/>
    <property type="match status" value="1"/>
</dbReference>
<dbReference type="PANTHER" id="PTHR13273:SF14">
    <property type="entry name" value="ANAMORSIN"/>
    <property type="match status" value="1"/>
</dbReference>
<dbReference type="Pfam" id="PF20922">
    <property type="entry name" value="Anamorsin_N"/>
    <property type="match status" value="1"/>
</dbReference>
<dbReference type="Pfam" id="PF05093">
    <property type="entry name" value="CIAPIN1"/>
    <property type="match status" value="2"/>
</dbReference>
<dbReference type="SUPFAM" id="SSF53335">
    <property type="entry name" value="S-adenosyl-L-methionine-dependent methyltransferases"/>
    <property type="match status" value="1"/>
</dbReference>
<feature type="chain" id="PRO_0000392311" description="Anamorsin homolog">
    <location>
        <begin position="1"/>
        <end position="254"/>
    </location>
</feature>
<feature type="region of interest" description="N-terminal SAM-like domain" evidence="1">
    <location>
        <begin position="4"/>
        <end position="132"/>
    </location>
</feature>
<feature type="region of interest" description="Linker" evidence="1">
    <location>
        <begin position="132"/>
        <end position="167"/>
    </location>
</feature>
<feature type="region of interest" description="Fe-S binding site A" evidence="1">
    <location>
        <begin position="177"/>
        <end position="191"/>
    </location>
</feature>
<feature type="region of interest" description="Fe-S binding site B" evidence="1">
    <location>
        <begin position="215"/>
        <end position="229"/>
    </location>
</feature>
<feature type="short sequence motif" description="Cx2C motif 1" evidence="1">
    <location>
        <begin position="215"/>
        <end position="218"/>
    </location>
</feature>
<feature type="short sequence motif" description="Cx2C motif 2" evidence="1">
    <location>
        <begin position="226"/>
        <end position="229"/>
    </location>
</feature>
<feature type="binding site" evidence="1">
    <location>
        <position position="177"/>
    </location>
    <ligand>
        <name>[2Fe-2S] cluster</name>
        <dbReference type="ChEBI" id="CHEBI:190135"/>
    </ligand>
</feature>
<feature type="binding site" evidence="1">
    <location>
        <position position="186"/>
    </location>
    <ligand>
        <name>[2Fe-2S] cluster</name>
        <dbReference type="ChEBI" id="CHEBI:190135"/>
    </ligand>
</feature>
<feature type="binding site" evidence="1">
    <location>
        <position position="189"/>
    </location>
    <ligand>
        <name>[2Fe-2S] cluster</name>
        <dbReference type="ChEBI" id="CHEBI:190135"/>
    </ligand>
</feature>
<feature type="binding site" evidence="1">
    <location>
        <position position="191"/>
    </location>
    <ligand>
        <name>[2Fe-2S] cluster</name>
        <dbReference type="ChEBI" id="CHEBI:190135"/>
    </ligand>
</feature>
<feature type="binding site" evidence="1">
    <location>
        <position position="215"/>
    </location>
    <ligand>
        <name>[4Fe-4S] cluster</name>
        <dbReference type="ChEBI" id="CHEBI:49883"/>
    </ligand>
</feature>
<feature type="binding site" evidence="1">
    <location>
        <position position="218"/>
    </location>
    <ligand>
        <name>[4Fe-4S] cluster</name>
        <dbReference type="ChEBI" id="CHEBI:49883"/>
    </ligand>
</feature>
<feature type="binding site" evidence="1">
    <location>
        <position position="226"/>
    </location>
    <ligand>
        <name>[4Fe-4S] cluster</name>
        <dbReference type="ChEBI" id="CHEBI:49883"/>
    </ligand>
</feature>
<feature type="binding site" evidence="1">
    <location>
        <position position="229"/>
    </location>
    <ligand>
        <name>[4Fe-4S] cluster</name>
        <dbReference type="ChEBI" id="CHEBI:49883"/>
    </ligand>
</feature>
<protein>
    <recommendedName>
        <fullName evidence="1">Anamorsin homolog</fullName>
    </recommendedName>
    <alternativeName>
        <fullName evidence="1">Fe-S cluster assembly protein DRE2 homolog</fullName>
    </alternativeName>
</protein>
<sequence>MNFVQENNHVLYIWNGAISGEIEQEVNRLKAIPNVQVNVENADRVLLAGYTPSQFDVVLANVPSGNSEMASSLLKLVKPKGKVVFKDDSANAEATRSNLLLSGFINITSLDGNVFVGEKPNYEIGSAAKLSLGGNKAKVAAVWKLDVDDDDDERIDEDELLDEEDKVKPTAESLRVCGTTGKRKACKDCSCGLAEELEAETKGSAVANSEPKSSCGSCYLGDAFRCATCPYLGMPAFKPGEKIQLTDTQMRADI</sequence>
<comment type="function">
    <text evidence="1">Component of the cytosolic iron-sulfur (Fe-S) protein assembly (CIA) machinery. Required for the maturation of extramitochondrial Fe-S proteins. Part of an electron transfer chain functioning in an early step of cytosolic Fe-S biogenesis, facilitating the de novo assembly of a [4Fe-4S] cluster on the cytosolic Fe-S scaffold complex. Electrons are transferred from NADPH via a FAD- and FMN-containing diflavin oxidoreductase. Together with the diflavin oxidoreductase, also required for the assembly of the diferric tyrosyl radical cofactor of ribonucleotide reductase (RNR), probably by providing electrons for reduction during radical cofactor maturation in the catalytic small subunit.</text>
</comment>
<comment type="cofactor">
    <cofactor evidence="1">
        <name>[2Fe-2S] cluster</name>
        <dbReference type="ChEBI" id="CHEBI:190135"/>
    </cofactor>
</comment>
<comment type="cofactor">
    <cofactor evidence="1">
        <name>[4Fe-4S] cluster</name>
        <dbReference type="ChEBI" id="CHEBI:49883"/>
    </cofactor>
</comment>
<comment type="subunit">
    <text evidence="1">Monomer.</text>
</comment>
<comment type="subcellular location">
    <subcellularLocation>
        <location evidence="1">Cytoplasm</location>
    </subcellularLocation>
    <subcellularLocation>
        <location evidence="1">Mitochondrion intermembrane space</location>
    </subcellularLocation>
</comment>
<comment type="domain">
    <text evidence="1">The C-terminal domain binds 2 Fe-S clusters but is otherwise mostly in an intrinsically disordered conformation.</text>
</comment>
<comment type="domain">
    <text evidence="1">The N-terminal domain has structural similarity with S-adenosyl-L-methionine-dependent methyltransferases, but does not bind S-adenosyl-L-methionine. It is required for correct assembly of the 2 Fe-S clusters.</text>
</comment>
<comment type="domain">
    <text evidence="1">The twin Cx2C motifs are involved in the recognition by the mitochondrial MIA40-ERV1 disulfide relay system. The formation of 2 disulfide bonds in the Cx2C motifs through dithiol/disulfide exchange reactions effectively traps the protein in the mitochondrial intermembrane space.</text>
</comment>
<comment type="similarity">
    <text evidence="1">Belongs to the anamorsin family.</text>
</comment>
<reference key="1">
    <citation type="journal article" date="2007" name="Science">
        <title>Genome sequence of Aedes aegypti, a major arbovirus vector.</title>
        <authorList>
            <person name="Nene V."/>
            <person name="Wortman J.R."/>
            <person name="Lawson D."/>
            <person name="Haas B.J."/>
            <person name="Kodira C.D."/>
            <person name="Tu Z.J."/>
            <person name="Loftus B.J."/>
            <person name="Xi Z."/>
            <person name="Megy K."/>
            <person name="Grabherr M."/>
            <person name="Ren Q."/>
            <person name="Zdobnov E.M."/>
            <person name="Lobo N.F."/>
            <person name="Campbell K.S."/>
            <person name="Brown S.E."/>
            <person name="Bonaldo M.F."/>
            <person name="Zhu J."/>
            <person name="Sinkins S.P."/>
            <person name="Hogenkamp D.G."/>
            <person name="Amedeo P."/>
            <person name="Arensburger P."/>
            <person name="Atkinson P.W."/>
            <person name="Bidwell S.L."/>
            <person name="Biedler J."/>
            <person name="Birney E."/>
            <person name="Bruggner R.V."/>
            <person name="Costas J."/>
            <person name="Coy M.R."/>
            <person name="Crabtree J."/>
            <person name="Crawford M."/>
            <person name="DeBruyn B."/>
            <person name="DeCaprio D."/>
            <person name="Eiglmeier K."/>
            <person name="Eisenstadt E."/>
            <person name="El-Dorry H."/>
            <person name="Gelbart W.M."/>
            <person name="Gomes S.L."/>
            <person name="Hammond M."/>
            <person name="Hannick L.I."/>
            <person name="Hogan J.R."/>
            <person name="Holmes M.H."/>
            <person name="Jaffe D."/>
            <person name="Johnston S.J."/>
            <person name="Kennedy R.C."/>
            <person name="Koo H."/>
            <person name="Kravitz S."/>
            <person name="Kriventseva E.V."/>
            <person name="Kulp D."/>
            <person name="Labutti K."/>
            <person name="Lee E."/>
            <person name="Li S."/>
            <person name="Lovin D.D."/>
            <person name="Mao C."/>
            <person name="Mauceli E."/>
            <person name="Menck C.F."/>
            <person name="Miller J.R."/>
            <person name="Montgomery P."/>
            <person name="Mori A."/>
            <person name="Nascimento A.L."/>
            <person name="Naveira H.F."/>
            <person name="Nusbaum C."/>
            <person name="O'Leary S.B."/>
            <person name="Orvis J."/>
            <person name="Pertea M."/>
            <person name="Quesneville H."/>
            <person name="Reidenbach K.R."/>
            <person name="Rogers Y.-H.C."/>
            <person name="Roth C.W."/>
            <person name="Schneider J.R."/>
            <person name="Schatz M."/>
            <person name="Shumway M."/>
            <person name="Stanke M."/>
            <person name="Stinson E.O."/>
            <person name="Tubio J.M.C."/>
            <person name="Vanzee J.P."/>
            <person name="Verjovski-Almeida S."/>
            <person name="Werner D."/>
            <person name="White O.R."/>
            <person name="Wyder S."/>
            <person name="Zeng Q."/>
            <person name="Zhao Q."/>
            <person name="Zhao Y."/>
            <person name="Hill C.A."/>
            <person name="Raikhel A.S."/>
            <person name="Soares M.B."/>
            <person name="Knudson D.L."/>
            <person name="Lee N.H."/>
            <person name="Galagan J."/>
            <person name="Salzberg S.L."/>
            <person name="Paulsen I.T."/>
            <person name="Dimopoulos G."/>
            <person name="Collins F.H."/>
            <person name="Bruce B."/>
            <person name="Fraser-Liggett C.M."/>
            <person name="Severson D.W."/>
        </authorList>
    </citation>
    <scope>NUCLEOTIDE SEQUENCE [LARGE SCALE GENOMIC DNA]</scope>
    <source>
        <strain>LVPib12</strain>
    </source>
</reference>
<keyword id="KW-0001">2Fe-2S</keyword>
<keyword id="KW-0004">4Fe-4S</keyword>
<keyword id="KW-0963">Cytoplasm</keyword>
<keyword id="KW-0408">Iron</keyword>
<keyword id="KW-0411">Iron-sulfur</keyword>
<keyword id="KW-0479">Metal-binding</keyword>
<keyword id="KW-0496">Mitochondrion</keyword>
<keyword id="KW-1185">Reference proteome</keyword>
<evidence type="ECO:0000255" key="1">
    <source>
        <dbReference type="HAMAP-Rule" id="MF_03115"/>
    </source>
</evidence>
<organism>
    <name type="scientific">Aedes aegypti</name>
    <name type="common">Yellowfever mosquito</name>
    <name type="synonym">Culex aegypti</name>
    <dbReference type="NCBI Taxonomy" id="7159"/>
    <lineage>
        <taxon>Eukaryota</taxon>
        <taxon>Metazoa</taxon>
        <taxon>Ecdysozoa</taxon>
        <taxon>Arthropoda</taxon>
        <taxon>Hexapoda</taxon>
        <taxon>Insecta</taxon>
        <taxon>Pterygota</taxon>
        <taxon>Neoptera</taxon>
        <taxon>Endopterygota</taxon>
        <taxon>Diptera</taxon>
        <taxon>Nematocera</taxon>
        <taxon>Culicoidea</taxon>
        <taxon>Culicidae</taxon>
        <taxon>Culicinae</taxon>
        <taxon>Aedini</taxon>
        <taxon>Aedes</taxon>
        <taxon>Stegomyia</taxon>
    </lineage>
</organism>
<name>DRE2_AEDAE</name>
<gene>
    <name type="ORF">AAEL001501</name>
</gene>